<protein>
    <recommendedName>
        <fullName evidence="5">2,3-dimethylmalate dehydratase small subunit</fullName>
        <ecNumber>4.2.1.85</ecNumber>
    </recommendedName>
</protein>
<keyword id="KW-0456">Lyase</keyword>
<organism>
    <name type="scientific">Eubacterium barkeri</name>
    <name type="common">Clostridium barkeri</name>
    <dbReference type="NCBI Taxonomy" id="1528"/>
    <lineage>
        <taxon>Bacteria</taxon>
        <taxon>Bacillati</taxon>
        <taxon>Bacillota</taxon>
        <taxon>Clostridia</taxon>
        <taxon>Eubacteriales</taxon>
        <taxon>Eubacteriaceae</taxon>
        <taxon>Eubacterium</taxon>
    </lineage>
</organism>
<feature type="chain" id="PRO_0000403995" description="2,3-dimethylmalate dehydratase small subunit">
    <location>
        <begin position="1"/>
        <end position="163"/>
    </location>
</feature>
<gene>
    <name evidence="5" type="primary">DmdB</name>
</gene>
<accession>Q0QLE1</accession>
<reference evidence="5" key="1">
    <citation type="journal article" date="2006" name="Proc. Natl. Acad. Sci. U.S.A.">
        <title>Molecular and functional analysis of nicotinate catabolism in Eubacterium barkeri.</title>
        <authorList>
            <person name="Alhapel A."/>
            <person name="Darley D.J."/>
            <person name="Wagener N."/>
            <person name="Eckel E."/>
            <person name="Elsner N."/>
            <person name="Pierik A.J."/>
        </authorList>
    </citation>
    <scope>NUCLEOTIDE SEQUENCE [GENOMIC DNA]</scope>
    <scope>PATHWAY</scope>
    <source>
        <strain evidence="5">ATCC 25849 / DSM 1223 / JCM 1389 / NCIMB 10623 / VKM B-1775 / VPI 5359</strain>
    </source>
</reference>
<reference evidence="4" key="2">
    <citation type="journal article" date="1984" name="Hoppe-Seyler's Z. Physiol. Chem.">
        <title>Nicotinic acid metabolism. Dimethylmaleate hydratase.</title>
        <authorList>
            <person name="Kollmann-Koch A."/>
            <person name="Eggerer H."/>
        </authorList>
    </citation>
    <scope>CATALYTIC ACTIVITY</scope>
    <scope>BIOPHYSICOCHEMICAL PROPERTIES</scope>
    <scope>INDUCTION</scope>
    <source>
        <strain evidence="3">ATCC 25849 / DSM 1223 / JCM 1389 / NCIMB 10623 / VKM B-1775 / VPI 5359</strain>
    </source>
</reference>
<name>DMDB_EUBBA</name>
<proteinExistence type="evidence at protein level"/>
<comment type="catalytic activity">
    <reaction evidence="3">
        <text>(2R,3S)-2,3-dimethylmalate = dimethylmaleate + H2O</text>
        <dbReference type="Rhea" id="RHEA:20253"/>
        <dbReference type="ChEBI" id="CHEBI:15377"/>
        <dbReference type="ChEBI" id="CHEBI:17081"/>
        <dbReference type="ChEBI" id="CHEBI:57422"/>
        <dbReference type="EC" id="4.2.1.85"/>
    </reaction>
</comment>
<comment type="biophysicochemical properties">
    <kinetics>
        <KM evidence="3">3.1 mM for dimethylmaleate</KM>
    </kinetics>
    <phDependence>
        <text evidence="3">Highly active between pH 6.5 and 9.0. Retains 50% and 10% of maximum activity at pH 5.0 and 4.5 respectively.</text>
    </phDependence>
</comment>
<comment type="pathway">
    <text evidence="2">Cofactor degradation; nicotinate degradation; propanoate and pyruvate from 6-hydroxynicotinate: step 7/8.</text>
</comment>
<comment type="subunit">
    <text evidence="1">Heterodimer of a large and a small subunit.</text>
</comment>
<comment type="induction">
    <text evidence="3">By nicotinic acid.</text>
</comment>
<comment type="similarity">
    <text evidence="4">Belongs to the LeuD family. LeuD type 2 subfamily.</text>
</comment>
<evidence type="ECO:0000250" key="1">
    <source>
        <dbReference type="UniProtKB" id="A6LPX5"/>
    </source>
</evidence>
<evidence type="ECO:0000269" key="2">
    <source>
    </source>
</evidence>
<evidence type="ECO:0000269" key="3">
    <source>
    </source>
</evidence>
<evidence type="ECO:0000305" key="4"/>
<evidence type="ECO:0000312" key="5">
    <source>
        <dbReference type="EMBL" id="ABC88409.1"/>
    </source>
</evidence>
<sequence>MKAKGSVFRYGDNVDTDVIIPARFLNTSDPLELAAHCMEDIDADFSSKVNAGDIIVADDNFGCGSSREHAPISIKASGVSCVIANSFARIFYRNAINIGLPILECPEAVAVIEAGDEVEVDFDSGVITDVTKGQSFQGQAFPEFMQTLIAAGGLVNYINATEK</sequence>
<dbReference type="EC" id="4.2.1.85"/>
<dbReference type="EMBL" id="DQ310789">
    <property type="protein sequence ID" value="ABC88409.1"/>
    <property type="molecule type" value="Genomic_DNA"/>
</dbReference>
<dbReference type="RefSeq" id="WP_090245328.1">
    <property type="nucleotide sequence ID" value="NZ_FNOU01000012.1"/>
</dbReference>
<dbReference type="SMR" id="Q0QLE1"/>
<dbReference type="STRING" id="1528.SAMN04488579_1123"/>
<dbReference type="KEGG" id="ag:ABC88409"/>
<dbReference type="OrthoDB" id="9777465at2"/>
<dbReference type="BioCyc" id="MetaCyc:MONOMER-13677"/>
<dbReference type="UniPathway" id="UPA01010">
    <property type="reaction ID" value="UER01018"/>
</dbReference>
<dbReference type="GO" id="GO:0003861">
    <property type="term" value="F:3-isopropylmalate dehydratase activity"/>
    <property type="evidence" value="ECO:0007669"/>
    <property type="project" value="UniProtKB-UniRule"/>
</dbReference>
<dbReference type="GO" id="GO:0047868">
    <property type="term" value="F:dimethylmaleate hydratase activity"/>
    <property type="evidence" value="ECO:0000314"/>
    <property type="project" value="UniProtKB"/>
</dbReference>
<dbReference type="GO" id="GO:0009098">
    <property type="term" value="P:L-leucine biosynthetic process"/>
    <property type="evidence" value="ECO:0007669"/>
    <property type="project" value="UniProtKB-UniRule"/>
</dbReference>
<dbReference type="GO" id="GO:1901848">
    <property type="term" value="P:nicotinate catabolic process"/>
    <property type="evidence" value="ECO:0000314"/>
    <property type="project" value="GO_Central"/>
</dbReference>
<dbReference type="CDD" id="cd01577">
    <property type="entry name" value="IPMI_Swivel"/>
    <property type="match status" value="1"/>
</dbReference>
<dbReference type="FunFam" id="3.20.19.10:FF:000007">
    <property type="entry name" value="Isopropylmalate/citramalate isomerase small subunit"/>
    <property type="match status" value="1"/>
</dbReference>
<dbReference type="Gene3D" id="3.20.19.10">
    <property type="entry name" value="Aconitase, domain 4"/>
    <property type="match status" value="1"/>
</dbReference>
<dbReference type="HAMAP" id="MF_01032">
    <property type="entry name" value="LeuD_type2"/>
    <property type="match status" value="1"/>
</dbReference>
<dbReference type="InterPro" id="IPR015928">
    <property type="entry name" value="Aconitase/3IPM_dehydase_swvl"/>
</dbReference>
<dbReference type="InterPro" id="IPR000573">
    <property type="entry name" value="AconitaseA/IPMdHydase_ssu_swvl"/>
</dbReference>
<dbReference type="InterPro" id="IPR033940">
    <property type="entry name" value="IPMI_Swivel"/>
</dbReference>
<dbReference type="InterPro" id="IPR050075">
    <property type="entry name" value="LeuD"/>
</dbReference>
<dbReference type="InterPro" id="IPR011824">
    <property type="entry name" value="LeuD/DmdB_bac"/>
</dbReference>
<dbReference type="InterPro" id="IPR011827">
    <property type="entry name" value="LeuD_type2/HacB/DmdB"/>
</dbReference>
<dbReference type="NCBIfam" id="TIGR02084">
    <property type="entry name" value="leud"/>
    <property type="match status" value="1"/>
</dbReference>
<dbReference type="NCBIfam" id="TIGR02087">
    <property type="entry name" value="LEUD_arch"/>
    <property type="match status" value="1"/>
</dbReference>
<dbReference type="PANTHER" id="PTHR43345:SF2">
    <property type="entry name" value="3-ISOPROPYLMALATE DEHYDRATASE SMALL SUBUNIT 1"/>
    <property type="match status" value="1"/>
</dbReference>
<dbReference type="PANTHER" id="PTHR43345">
    <property type="entry name" value="3-ISOPROPYLMALATE DEHYDRATASE SMALL SUBUNIT 2-RELATED-RELATED"/>
    <property type="match status" value="1"/>
</dbReference>
<dbReference type="Pfam" id="PF00694">
    <property type="entry name" value="Aconitase_C"/>
    <property type="match status" value="1"/>
</dbReference>
<dbReference type="SUPFAM" id="SSF52016">
    <property type="entry name" value="LeuD/IlvD-like"/>
    <property type="match status" value="1"/>
</dbReference>